<accession>Q2VYQ2</accession>
<gene>
    <name evidence="1" type="primary">metK</name>
    <name type="ordered locus">amb4469</name>
</gene>
<organism>
    <name type="scientific">Paramagnetospirillum magneticum (strain ATCC 700264 / AMB-1)</name>
    <name type="common">Magnetospirillum magneticum</name>
    <dbReference type="NCBI Taxonomy" id="342108"/>
    <lineage>
        <taxon>Bacteria</taxon>
        <taxon>Pseudomonadati</taxon>
        <taxon>Pseudomonadota</taxon>
        <taxon>Alphaproteobacteria</taxon>
        <taxon>Rhodospirillales</taxon>
        <taxon>Magnetospirillaceae</taxon>
        <taxon>Paramagnetospirillum</taxon>
    </lineage>
</organism>
<dbReference type="EC" id="2.5.1.6" evidence="1"/>
<dbReference type="EMBL" id="AP007255">
    <property type="protein sequence ID" value="BAE53273.1"/>
    <property type="molecule type" value="Genomic_DNA"/>
</dbReference>
<dbReference type="RefSeq" id="WP_011386813.1">
    <property type="nucleotide sequence ID" value="NC_007626.1"/>
</dbReference>
<dbReference type="SMR" id="Q2VYQ2"/>
<dbReference type="STRING" id="342108.amb4469"/>
<dbReference type="KEGG" id="mag:amb4469"/>
<dbReference type="HOGENOM" id="CLU_041802_1_1_5"/>
<dbReference type="OrthoDB" id="9801686at2"/>
<dbReference type="UniPathway" id="UPA00315">
    <property type="reaction ID" value="UER00080"/>
</dbReference>
<dbReference type="Proteomes" id="UP000007058">
    <property type="component" value="Chromosome"/>
</dbReference>
<dbReference type="GO" id="GO:0005737">
    <property type="term" value="C:cytoplasm"/>
    <property type="evidence" value="ECO:0007669"/>
    <property type="project" value="UniProtKB-SubCell"/>
</dbReference>
<dbReference type="GO" id="GO:0005524">
    <property type="term" value="F:ATP binding"/>
    <property type="evidence" value="ECO:0007669"/>
    <property type="project" value="UniProtKB-UniRule"/>
</dbReference>
<dbReference type="GO" id="GO:0000287">
    <property type="term" value="F:magnesium ion binding"/>
    <property type="evidence" value="ECO:0007669"/>
    <property type="project" value="UniProtKB-UniRule"/>
</dbReference>
<dbReference type="GO" id="GO:0004478">
    <property type="term" value="F:methionine adenosyltransferase activity"/>
    <property type="evidence" value="ECO:0007669"/>
    <property type="project" value="UniProtKB-UniRule"/>
</dbReference>
<dbReference type="GO" id="GO:0006730">
    <property type="term" value="P:one-carbon metabolic process"/>
    <property type="evidence" value="ECO:0007669"/>
    <property type="project" value="UniProtKB-KW"/>
</dbReference>
<dbReference type="GO" id="GO:0006556">
    <property type="term" value="P:S-adenosylmethionine biosynthetic process"/>
    <property type="evidence" value="ECO:0007669"/>
    <property type="project" value="UniProtKB-UniRule"/>
</dbReference>
<dbReference type="CDD" id="cd18079">
    <property type="entry name" value="S-AdoMet_synt"/>
    <property type="match status" value="1"/>
</dbReference>
<dbReference type="FunFam" id="3.30.300.10:FF:000003">
    <property type="entry name" value="S-adenosylmethionine synthase"/>
    <property type="match status" value="1"/>
</dbReference>
<dbReference type="Gene3D" id="3.30.300.10">
    <property type="match status" value="3"/>
</dbReference>
<dbReference type="HAMAP" id="MF_00086">
    <property type="entry name" value="S_AdoMet_synth1"/>
    <property type="match status" value="1"/>
</dbReference>
<dbReference type="InterPro" id="IPR022631">
    <property type="entry name" value="ADOMET_SYNTHASE_CS"/>
</dbReference>
<dbReference type="InterPro" id="IPR022630">
    <property type="entry name" value="S-AdoMet_synt_C"/>
</dbReference>
<dbReference type="InterPro" id="IPR022629">
    <property type="entry name" value="S-AdoMet_synt_central"/>
</dbReference>
<dbReference type="InterPro" id="IPR022628">
    <property type="entry name" value="S-AdoMet_synt_N"/>
</dbReference>
<dbReference type="InterPro" id="IPR002133">
    <property type="entry name" value="S-AdoMet_synthetase"/>
</dbReference>
<dbReference type="InterPro" id="IPR022636">
    <property type="entry name" value="S-AdoMet_synthetase_sfam"/>
</dbReference>
<dbReference type="NCBIfam" id="TIGR01034">
    <property type="entry name" value="metK"/>
    <property type="match status" value="1"/>
</dbReference>
<dbReference type="PANTHER" id="PTHR11964">
    <property type="entry name" value="S-ADENOSYLMETHIONINE SYNTHETASE"/>
    <property type="match status" value="1"/>
</dbReference>
<dbReference type="Pfam" id="PF02773">
    <property type="entry name" value="S-AdoMet_synt_C"/>
    <property type="match status" value="1"/>
</dbReference>
<dbReference type="Pfam" id="PF02772">
    <property type="entry name" value="S-AdoMet_synt_M"/>
    <property type="match status" value="1"/>
</dbReference>
<dbReference type="Pfam" id="PF00438">
    <property type="entry name" value="S-AdoMet_synt_N"/>
    <property type="match status" value="1"/>
</dbReference>
<dbReference type="PIRSF" id="PIRSF000497">
    <property type="entry name" value="MAT"/>
    <property type="match status" value="1"/>
</dbReference>
<dbReference type="SUPFAM" id="SSF55973">
    <property type="entry name" value="S-adenosylmethionine synthetase"/>
    <property type="match status" value="3"/>
</dbReference>
<dbReference type="PROSITE" id="PS00376">
    <property type="entry name" value="ADOMET_SYNTHASE_1"/>
    <property type="match status" value="1"/>
</dbReference>
<dbReference type="PROSITE" id="PS00377">
    <property type="entry name" value="ADOMET_SYNTHASE_2"/>
    <property type="match status" value="1"/>
</dbReference>
<name>METK_PARM1</name>
<proteinExistence type="inferred from homology"/>
<comment type="function">
    <text evidence="1">Catalyzes the formation of S-adenosylmethionine (AdoMet) from methionine and ATP. The overall synthetic reaction is composed of two sequential steps, AdoMet formation and the subsequent tripolyphosphate hydrolysis which occurs prior to release of AdoMet from the enzyme.</text>
</comment>
<comment type="catalytic activity">
    <reaction evidence="1">
        <text>L-methionine + ATP + H2O = S-adenosyl-L-methionine + phosphate + diphosphate</text>
        <dbReference type="Rhea" id="RHEA:21080"/>
        <dbReference type="ChEBI" id="CHEBI:15377"/>
        <dbReference type="ChEBI" id="CHEBI:30616"/>
        <dbReference type="ChEBI" id="CHEBI:33019"/>
        <dbReference type="ChEBI" id="CHEBI:43474"/>
        <dbReference type="ChEBI" id="CHEBI:57844"/>
        <dbReference type="ChEBI" id="CHEBI:59789"/>
        <dbReference type="EC" id="2.5.1.6"/>
    </reaction>
</comment>
<comment type="cofactor">
    <cofactor evidence="1">
        <name>Mg(2+)</name>
        <dbReference type="ChEBI" id="CHEBI:18420"/>
    </cofactor>
    <text evidence="1">Binds 2 divalent ions per subunit.</text>
</comment>
<comment type="cofactor">
    <cofactor evidence="1">
        <name>K(+)</name>
        <dbReference type="ChEBI" id="CHEBI:29103"/>
    </cofactor>
    <text evidence="1">Binds 1 potassium ion per subunit.</text>
</comment>
<comment type="pathway">
    <text evidence="1">Amino-acid biosynthesis; S-adenosyl-L-methionine biosynthesis; S-adenosyl-L-methionine from L-methionine: step 1/1.</text>
</comment>
<comment type="subunit">
    <text evidence="1">Homotetramer; dimer of dimers.</text>
</comment>
<comment type="subcellular location">
    <subcellularLocation>
        <location evidence="1">Cytoplasm</location>
    </subcellularLocation>
</comment>
<comment type="similarity">
    <text evidence="1">Belongs to the AdoMet synthase family.</text>
</comment>
<reference key="1">
    <citation type="journal article" date="2005" name="DNA Res.">
        <title>Complete genome sequence of the facultative anaerobic magnetotactic bacterium Magnetospirillum sp. strain AMB-1.</title>
        <authorList>
            <person name="Matsunaga T."/>
            <person name="Okamura Y."/>
            <person name="Fukuda Y."/>
            <person name="Wahyudi A.T."/>
            <person name="Murase Y."/>
            <person name="Takeyama H."/>
        </authorList>
    </citation>
    <scope>NUCLEOTIDE SEQUENCE [LARGE SCALE GENOMIC DNA]</scope>
    <source>
        <strain>ATCC 700264 / AMB-1</strain>
    </source>
</reference>
<evidence type="ECO:0000255" key="1">
    <source>
        <dbReference type="HAMAP-Rule" id="MF_00086"/>
    </source>
</evidence>
<feature type="chain" id="PRO_0000241004" description="S-adenosylmethionine synthase">
    <location>
        <begin position="1"/>
        <end position="388"/>
    </location>
</feature>
<feature type="region of interest" description="Flexible loop" evidence="1">
    <location>
        <begin position="102"/>
        <end position="112"/>
    </location>
</feature>
<feature type="binding site" description="in other chain" evidence="1">
    <location>
        <position position="17"/>
    </location>
    <ligand>
        <name>ATP</name>
        <dbReference type="ChEBI" id="CHEBI:30616"/>
        <note>ligand shared between two neighboring subunits</note>
    </ligand>
</feature>
<feature type="binding site" evidence="1">
    <location>
        <position position="19"/>
    </location>
    <ligand>
        <name>Mg(2+)</name>
        <dbReference type="ChEBI" id="CHEBI:18420"/>
    </ligand>
</feature>
<feature type="binding site" evidence="1">
    <location>
        <position position="45"/>
    </location>
    <ligand>
        <name>K(+)</name>
        <dbReference type="ChEBI" id="CHEBI:29103"/>
    </ligand>
</feature>
<feature type="binding site" description="in other chain" evidence="1">
    <location>
        <position position="58"/>
    </location>
    <ligand>
        <name>L-methionine</name>
        <dbReference type="ChEBI" id="CHEBI:57844"/>
        <note>ligand shared between two neighboring subunits</note>
    </ligand>
</feature>
<feature type="binding site" description="in other chain" evidence="1">
    <location>
        <position position="102"/>
    </location>
    <ligand>
        <name>L-methionine</name>
        <dbReference type="ChEBI" id="CHEBI:57844"/>
        <note>ligand shared between two neighboring subunits</note>
    </ligand>
</feature>
<feature type="binding site" description="in other chain" evidence="1">
    <location>
        <begin position="167"/>
        <end position="169"/>
    </location>
    <ligand>
        <name>ATP</name>
        <dbReference type="ChEBI" id="CHEBI:30616"/>
        <note>ligand shared between two neighboring subunits</note>
    </ligand>
</feature>
<feature type="binding site" description="in other chain" evidence="1">
    <location>
        <begin position="232"/>
        <end position="233"/>
    </location>
    <ligand>
        <name>ATP</name>
        <dbReference type="ChEBI" id="CHEBI:30616"/>
        <note>ligand shared between two neighboring subunits</note>
    </ligand>
</feature>
<feature type="binding site" evidence="1">
    <location>
        <position position="241"/>
    </location>
    <ligand>
        <name>ATP</name>
        <dbReference type="ChEBI" id="CHEBI:30616"/>
        <note>ligand shared between two neighboring subunits</note>
    </ligand>
</feature>
<feature type="binding site" evidence="1">
    <location>
        <position position="241"/>
    </location>
    <ligand>
        <name>L-methionine</name>
        <dbReference type="ChEBI" id="CHEBI:57844"/>
        <note>ligand shared between two neighboring subunits</note>
    </ligand>
</feature>
<feature type="binding site" description="in other chain" evidence="1">
    <location>
        <begin position="247"/>
        <end position="248"/>
    </location>
    <ligand>
        <name>ATP</name>
        <dbReference type="ChEBI" id="CHEBI:30616"/>
        <note>ligand shared between two neighboring subunits</note>
    </ligand>
</feature>
<feature type="binding site" evidence="1">
    <location>
        <position position="264"/>
    </location>
    <ligand>
        <name>ATP</name>
        <dbReference type="ChEBI" id="CHEBI:30616"/>
        <note>ligand shared between two neighboring subunits</note>
    </ligand>
</feature>
<feature type="binding site" evidence="1">
    <location>
        <position position="268"/>
    </location>
    <ligand>
        <name>ATP</name>
        <dbReference type="ChEBI" id="CHEBI:30616"/>
        <note>ligand shared between two neighboring subunits</note>
    </ligand>
</feature>
<feature type="binding site" description="in other chain" evidence="1">
    <location>
        <position position="272"/>
    </location>
    <ligand>
        <name>L-methionine</name>
        <dbReference type="ChEBI" id="CHEBI:57844"/>
        <note>ligand shared between two neighboring subunits</note>
    </ligand>
</feature>
<protein>
    <recommendedName>
        <fullName evidence="1">S-adenosylmethionine synthase</fullName>
        <shortName evidence="1">AdoMet synthase</shortName>
        <ecNumber evidence="1">2.5.1.6</ecNumber>
    </recommendedName>
    <alternativeName>
        <fullName evidence="1">MAT</fullName>
    </alternativeName>
    <alternativeName>
        <fullName evidence="1">Methionine adenosyltransferase</fullName>
    </alternativeName>
</protein>
<sequence>MSKKNFLFTSESVSEGHPDKVADRISDAVVDAFLGADPYARVAVETLVTTNLIVMAGEVRGPASVNAALMDELARHAVKDIGYEQDGFHWKNAEIINRVHSQSADIAQGVDAAGDKDEGAGDQGIMFGYACNETPVLMPAPIYYSHEILKSLAEARHSGAAPQLLPDSKSQVTLEYRDGKPVRATSVVVSHQHVDGLSQADIKEIVRPHVKNVLPEGWMPAEDQFYVNPTGRFVIGGPDGDTGLTGRKIIVDTYGGAAPHGGGAFSGKDPTKVDRSAAYAARYLAKNVVASGLADKCVIQLSYAIGVSKPLSVYVDTSGTCKVDEDKLAVVLQQLVDLSPRGIRTHLGLNKPIYARTAAYGHFGRSPDADGGFSWEKTDLVEQLKKAF</sequence>
<keyword id="KW-0067">ATP-binding</keyword>
<keyword id="KW-0963">Cytoplasm</keyword>
<keyword id="KW-0460">Magnesium</keyword>
<keyword id="KW-0479">Metal-binding</keyword>
<keyword id="KW-0547">Nucleotide-binding</keyword>
<keyword id="KW-0554">One-carbon metabolism</keyword>
<keyword id="KW-0630">Potassium</keyword>
<keyword id="KW-0808">Transferase</keyword>